<name>ARSC_STAA3</name>
<accession>Q2FFW6</accession>
<organism>
    <name type="scientific">Staphylococcus aureus (strain USA300)</name>
    <dbReference type="NCBI Taxonomy" id="367830"/>
    <lineage>
        <taxon>Bacteria</taxon>
        <taxon>Bacillati</taxon>
        <taxon>Bacillota</taxon>
        <taxon>Bacilli</taxon>
        <taxon>Bacillales</taxon>
        <taxon>Staphylococcaceae</taxon>
        <taxon>Staphylococcus</taxon>
    </lineage>
</organism>
<feature type="chain" id="PRO_1000069599" description="Arsenate reductase">
    <location>
        <begin position="1"/>
        <end position="131"/>
    </location>
</feature>
<feature type="active site" description="Nucleophile" evidence="1">
    <location>
        <position position="10"/>
    </location>
</feature>
<feature type="active site" description="Nucleophile" evidence="1">
    <location>
        <position position="82"/>
    </location>
</feature>
<feature type="active site" description="Nucleophile" evidence="1">
    <location>
        <position position="89"/>
    </location>
</feature>
<feature type="disulfide bond" description="Redox-active; alternate" evidence="1">
    <location>
        <begin position="10"/>
        <end position="82"/>
    </location>
</feature>
<feature type="disulfide bond" description="Redox-active; alternate" evidence="1">
    <location>
        <begin position="82"/>
        <end position="89"/>
    </location>
</feature>
<protein>
    <recommendedName>
        <fullName evidence="1">Arsenate reductase</fullName>
        <ecNumber evidence="1">1.20.4.4</ecNumber>
    </recommendedName>
</protein>
<comment type="function">
    <text evidence="1">Catalyzes the reduction of arsenate [As(V)] to arsenite [As(III)].</text>
</comment>
<comment type="catalytic activity">
    <reaction evidence="1">
        <text>arsenate + [thioredoxin]-dithiol + H(+) = arsenite + [thioredoxin]-disulfide + H2O</text>
        <dbReference type="Rhea" id="RHEA:43848"/>
        <dbReference type="Rhea" id="RHEA-COMP:10698"/>
        <dbReference type="Rhea" id="RHEA-COMP:10700"/>
        <dbReference type="ChEBI" id="CHEBI:15377"/>
        <dbReference type="ChEBI" id="CHEBI:15378"/>
        <dbReference type="ChEBI" id="CHEBI:29242"/>
        <dbReference type="ChEBI" id="CHEBI:29950"/>
        <dbReference type="ChEBI" id="CHEBI:48597"/>
        <dbReference type="ChEBI" id="CHEBI:50058"/>
        <dbReference type="EC" id="1.20.4.4"/>
    </reaction>
</comment>
<comment type="subcellular location">
    <subcellularLocation>
        <location evidence="1">Cytoplasm</location>
    </subcellularLocation>
</comment>
<comment type="similarity">
    <text evidence="1">Belongs to the low molecular weight phosphotyrosine protein phosphatase family. Thioredoxin-coupled ArsC subfamily.</text>
</comment>
<sequence length="131" mass="14687">MTKKTIYFICTGNSCRSQMAEGWAKQILADDWNVYSAGIETHGVNPKAIEAMKEVGIDISNHTSDLIDNNIIKNSNLVVTLCSDADVNCPSLPTNVKKEHWGFDDPAGKPWSEFQRVRDEIKIAIENFKSR</sequence>
<gene>
    <name evidence="1" type="primary">arsC</name>
    <name type="ordered locus">SAUSA300_1719</name>
</gene>
<reference key="1">
    <citation type="journal article" date="2006" name="Lancet">
        <title>Complete genome sequence of USA300, an epidemic clone of community-acquired meticillin-resistant Staphylococcus aureus.</title>
        <authorList>
            <person name="Diep B.A."/>
            <person name="Gill S.R."/>
            <person name="Chang R.F."/>
            <person name="Phan T.H."/>
            <person name="Chen J.H."/>
            <person name="Davidson M.G."/>
            <person name="Lin F."/>
            <person name="Lin J."/>
            <person name="Carleton H.A."/>
            <person name="Mongodin E.F."/>
            <person name="Sensabaugh G.F."/>
            <person name="Perdreau-Remington F."/>
        </authorList>
    </citation>
    <scope>NUCLEOTIDE SEQUENCE [LARGE SCALE GENOMIC DNA]</scope>
    <source>
        <strain>USA300</strain>
    </source>
</reference>
<proteinExistence type="inferred from homology"/>
<keyword id="KW-0059">Arsenical resistance</keyword>
<keyword id="KW-0963">Cytoplasm</keyword>
<keyword id="KW-1015">Disulfide bond</keyword>
<keyword id="KW-0560">Oxidoreductase</keyword>
<keyword id="KW-0676">Redox-active center</keyword>
<dbReference type="EC" id="1.20.4.4" evidence="1"/>
<dbReference type="EMBL" id="CP000255">
    <property type="protein sequence ID" value="ABD21614.1"/>
    <property type="molecule type" value="Genomic_DNA"/>
</dbReference>
<dbReference type="RefSeq" id="WP_000163235.1">
    <property type="nucleotide sequence ID" value="NZ_CP027476.1"/>
</dbReference>
<dbReference type="SMR" id="Q2FFW6"/>
<dbReference type="KEGG" id="saa:SAUSA300_1719"/>
<dbReference type="HOGENOM" id="CLU_071415_3_2_9"/>
<dbReference type="OMA" id="VTMGCNV"/>
<dbReference type="Proteomes" id="UP000001939">
    <property type="component" value="Chromosome"/>
</dbReference>
<dbReference type="GO" id="GO:0005737">
    <property type="term" value="C:cytoplasm"/>
    <property type="evidence" value="ECO:0007669"/>
    <property type="project" value="UniProtKB-SubCell"/>
</dbReference>
<dbReference type="GO" id="GO:0030612">
    <property type="term" value="F:arsenate reductase (thioredoxin) activity"/>
    <property type="evidence" value="ECO:0007669"/>
    <property type="project" value="UniProtKB-UniRule"/>
</dbReference>
<dbReference type="GO" id="GO:0004725">
    <property type="term" value="F:protein tyrosine phosphatase activity"/>
    <property type="evidence" value="ECO:0007669"/>
    <property type="project" value="InterPro"/>
</dbReference>
<dbReference type="GO" id="GO:0046685">
    <property type="term" value="P:response to arsenic-containing substance"/>
    <property type="evidence" value="ECO:0007669"/>
    <property type="project" value="UniProtKB-KW"/>
</dbReference>
<dbReference type="CDD" id="cd16345">
    <property type="entry name" value="LMWP_ArsC"/>
    <property type="match status" value="1"/>
</dbReference>
<dbReference type="FunFam" id="3.40.50.2300:FF:000237">
    <property type="entry name" value="Arsenate reductase"/>
    <property type="match status" value="1"/>
</dbReference>
<dbReference type="Gene3D" id="3.40.50.2300">
    <property type="match status" value="1"/>
</dbReference>
<dbReference type="HAMAP" id="MF_01624">
    <property type="entry name" value="Arsenate_reduct"/>
    <property type="match status" value="1"/>
</dbReference>
<dbReference type="InterPro" id="IPR014064">
    <property type="entry name" value="Arsenate_reductase_ArsC"/>
</dbReference>
<dbReference type="InterPro" id="IPR023485">
    <property type="entry name" value="Ptyr_pPase"/>
</dbReference>
<dbReference type="InterPro" id="IPR036196">
    <property type="entry name" value="Ptyr_pPase_sf"/>
</dbReference>
<dbReference type="NCBIfam" id="TIGR02691">
    <property type="entry name" value="arsC_pI258_fam"/>
    <property type="match status" value="1"/>
</dbReference>
<dbReference type="NCBIfam" id="NF010053">
    <property type="entry name" value="PRK13530.1"/>
    <property type="match status" value="1"/>
</dbReference>
<dbReference type="PANTHER" id="PTHR43428">
    <property type="entry name" value="ARSENATE REDUCTASE"/>
    <property type="match status" value="1"/>
</dbReference>
<dbReference type="PANTHER" id="PTHR43428:SF1">
    <property type="entry name" value="ARSENATE REDUCTASE"/>
    <property type="match status" value="1"/>
</dbReference>
<dbReference type="Pfam" id="PF01451">
    <property type="entry name" value="LMWPc"/>
    <property type="match status" value="1"/>
</dbReference>
<dbReference type="SMART" id="SM00226">
    <property type="entry name" value="LMWPc"/>
    <property type="match status" value="1"/>
</dbReference>
<dbReference type="SUPFAM" id="SSF52788">
    <property type="entry name" value="Phosphotyrosine protein phosphatases I"/>
    <property type="match status" value="1"/>
</dbReference>
<evidence type="ECO:0000255" key="1">
    <source>
        <dbReference type="HAMAP-Rule" id="MF_01624"/>
    </source>
</evidence>